<organism>
    <name type="scientific">Mus musculus</name>
    <name type="common">Mouse</name>
    <dbReference type="NCBI Taxonomy" id="10090"/>
    <lineage>
        <taxon>Eukaryota</taxon>
        <taxon>Metazoa</taxon>
        <taxon>Chordata</taxon>
        <taxon>Craniata</taxon>
        <taxon>Vertebrata</taxon>
        <taxon>Euteleostomi</taxon>
        <taxon>Mammalia</taxon>
        <taxon>Eutheria</taxon>
        <taxon>Euarchontoglires</taxon>
        <taxon>Glires</taxon>
        <taxon>Rodentia</taxon>
        <taxon>Myomorpha</taxon>
        <taxon>Muroidea</taxon>
        <taxon>Muridae</taxon>
        <taxon>Murinae</taxon>
        <taxon>Mus</taxon>
        <taxon>Mus</taxon>
    </lineage>
</organism>
<evidence type="ECO:0000250" key="1"/>
<evidence type="ECO:0000250" key="2">
    <source>
        <dbReference type="UniProtKB" id="P04695"/>
    </source>
</evidence>
<evidence type="ECO:0000250" key="3">
    <source>
        <dbReference type="UniProtKB" id="P11488"/>
    </source>
</evidence>
<evidence type="ECO:0000255" key="4">
    <source>
        <dbReference type="PROSITE-ProRule" id="PRU01230"/>
    </source>
</evidence>
<evidence type="ECO:0000256" key="5">
    <source>
        <dbReference type="SAM" id="MobiDB-lite"/>
    </source>
</evidence>
<evidence type="ECO:0000269" key="6">
    <source>
    </source>
</evidence>
<evidence type="ECO:0000305" key="7"/>
<feature type="initiator methionine" description="Removed" evidence="2">
    <location>
        <position position="1"/>
    </location>
</feature>
<feature type="chain" id="PRO_0000203738" description="Guanine nucleotide-binding protein G(t) subunit alpha-1">
    <location>
        <begin position="2"/>
        <end position="350"/>
    </location>
</feature>
<feature type="domain" description="G-alpha" evidence="4">
    <location>
        <begin position="28"/>
        <end position="350"/>
    </location>
</feature>
<feature type="region of interest" description="Disordered" evidence="5">
    <location>
        <begin position="1"/>
        <end position="21"/>
    </location>
</feature>
<feature type="region of interest" description="G1 motif" evidence="4">
    <location>
        <begin position="31"/>
        <end position="44"/>
    </location>
</feature>
<feature type="region of interest" description="G2 motif" evidence="4">
    <location>
        <begin position="169"/>
        <end position="177"/>
    </location>
</feature>
<feature type="region of interest" description="G3 motif" evidence="4">
    <location>
        <begin position="192"/>
        <end position="201"/>
    </location>
</feature>
<feature type="region of interest" description="G4 motif" evidence="4">
    <location>
        <begin position="261"/>
        <end position="268"/>
    </location>
</feature>
<feature type="region of interest" description="G5 motif" evidence="4">
    <location>
        <begin position="320"/>
        <end position="325"/>
    </location>
</feature>
<feature type="region of interest" description="Interaction with RHO" evidence="2">
    <location>
        <begin position="340"/>
        <end position="350"/>
    </location>
</feature>
<feature type="compositionally biased region" description="Basic and acidic residues" evidence="5">
    <location>
        <begin position="7"/>
        <end position="21"/>
    </location>
</feature>
<feature type="binding site" evidence="2">
    <location>
        <begin position="36"/>
        <end position="43"/>
    </location>
    <ligand>
        <name>GTP</name>
        <dbReference type="ChEBI" id="CHEBI:37565"/>
    </ligand>
</feature>
<feature type="binding site" evidence="1">
    <location>
        <position position="43"/>
    </location>
    <ligand>
        <name>Mg(2+)</name>
        <dbReference type="ChEBI" id="CHEBI:18420"/>
    </ligand>
</feature>
<feature type="binding site" evidence="2">
    <location>
        <position position="146"/>
    </location>
    <ligand>
        <name>GTP</name>
        <dbReference type="ChEBI" id="CHEBI:37565"/>
    </ligand>
</feature>
<feature type="binding site" evidence="2">
    <location>
        <begin position="171"/>
        <end position="177"/>
    </location>
    <ligand>
        <name>GTP</name>
        <dbReference type="ChEBI" id="CHEBI:37565"/>
    </ligand>
</feature>
<feature type="binding site" evidence="1">
    <location>
        <position position="177"/>
    </location>
    <ligand>
        <name>Mg(2+)</name>
        <dbReference type="ChEBI" id="CHEBI:18420"/>
    </ligand>
</feature>
<feature type="binding site" evidence="2">
    <location>
        <position position="199"/>
    </location>
    <ligand>
        <name>GTP</name>
        <dbReference type="ChEBI" id="CHEBI:37565"/>
    </ligand>
</feature>
<feature type="binding site" evidence="2">
    <location>
        <begin position="265"/>
        <end position="268"/>
    </location>
    <ligand>
        <name>GTP</name>
        <dbReference type="ChEBI" id="CHEBI:37565"/>
    </ligand>
</feature>
<feature type="binding site" evidence="2">
    <location>
        <position position="322"/>
    </location>
    <ligand>
        <name>GTP</name>
        <dbReference type="ChEBI" id="CHEBI:37565"/>
    </ligand>
</feature>
<feature type="modified residue" description="Phosphotyrosine" evidence="3">
    <location>
        <position position="142"/>
    </location>
</feature>
<feature type="lipid moiety-binding region" description="N-myristoyl glycine" evidence="2">
    <location>
        <position position="2"/>
    </location>
</feature>
<proteinExistence type="evidence at protein level"/>
<comment type="function">
    <text evidence="2 3">Functions as a signal transducer for the rod photoreceptor RHO. Required for normal RHO-mediated light perception by the retina (By similarity). Guanine nucleotide-binding proteins (G proteins) function as transducers downstream of G protein-coupled receptors (GPCRs), such as the photoreceptor RHO. The alpha chain contains the guanine nucleotide binding site and alternates between an active, GTP-bound state and an inactive, GDP-bound state. Activated RHO promotes GDP release and GTP binding. Signaling is mediated via downstream effector proteins, such as cGMP-phosphodiesterase (By similarity).</text>
</comment>
<comment type="subunit">
    <text evidence="2 3">Heterotrimeric G proteins are composed of 3 subunits alpha, beta and gamma. The alpha chain contains the guanine nucleotide binding site. Interacts with RHO. Interacts with RGS9 and PDE6G (By similarity). Interacts (when myristoylated) with UNC119; interaction is required for localization in sensory neurons (By similarity).</text>
</comment>
<comment type="subcellular location">
    <subcellularLocation>
        <location evidence="6">Cell projection</location>
        <location evidence="6">Cilium</location>
        <location evidence="6">Photoreceptor outer segment</location>
    </subcellularLocation>
    <subcellularLocation>
        <location evidence="2">Membrane</location>
        <topology evidence="2">Peripheral membrane protein</topology>
    </subcellularLocation>
    <subcellularLocation>
        <location evidence="6">Photoreceptor inner segment</location>
    </subcellularLocation>
    <text evidence="6">Localizes mainly in the outer segment in the dark-adapted state, whereas is translocated to the inner part of the photoreceptors in the light-adapted state. During dark-adapted conditions, in the presence of UNC119 mislocalizes from the outer segment to the inner part of rod photoreceptors which leads to decreased photoreceptor damage caused by light.</text>
</comment>
<comment type="tissue specificity">
    <text evidence="6">In the retina, expressed in the rod photoreceptors.</text>
</comment>
<comment type="similarity">
    <text evidence="7">Belongs to the G-alpha family. G(i/o/t/z) subfamily.</text>
</comment>
<gene>
    <name type="primary">Gnat1</name>
    <name type="synonym">Gnat-1</name>
</gene>
<reference key="1">
    <citation type="journal article" date="1989" name="J. Biol. Chem.">
        <title>Characterization of the mouse rod transducin alpha subunit gene.</title>
        <authorList>
            <person name="Raport C.J."/>
            <person name="Dere B."/>
            <person name="Hurley J.B."/>
        </authorList>
    </citation>
    <scope>NUCLEOTIDE SEQUENCE [GENOMIC DNA]</scope>
</reference>
<reference key="2">
    <citation type="journal article" date="2004" name="Genome Res.">
        <title>The status, quality, and expansion of the NIH full-length cDNA project: the Mammalian Gene Collection (MGC).</title>
        <authorList>
            <consortium name="The MGC Project Team"/>
        </authorList>
    </citation>
    <scope>NUCLEOTIDE SEQUENCE [LARGE SCALE MRNA]</scope>
    <source>
        <tissue>Eye</tissue>
    </source>
</reference>
<reference key="3">
    <citation type="submission" date="2007-04" db="UniProtKB">
        <authorList>
            <person name="Lubec G."/>
            <person name="Kang S.U."/>
        </authorList>
    </citation>
    <scope>PROTEIN SEQUENCE OF 32-42; 194-201; 267-273 AND 330-341</scope>
    <scope>IDENTIFICATION BY MASS SPECTROMETRY</scope>
    <source>
        <strain>C57BL/6J</strain>
        <tissue>Brain</tissue>
    </source>
</reference>
<reference key="4">
    <citation type="journal article" date="1996" name="Mol. Reprod. Dev.">
        <title>G protein gene expression during mouse oocyte growth and maturation, and preimplantation embryo development.</title>
        <authorList>
            <person name="Williams C.J."/>
            <person name="Schultz R.M."/>
            <person name="Kopf G.S."/>
        </authorList>
    </citation>
    <scope>NUCLEOTIDE SEQUENCE [MRNA] OF 124-317</scope>
    <source>
        <strain>CF-1 / Harlan</strain>
        <tissue>Retina</tissue>
    </source>
</reference>
<reference key="5">
    <citation type="journal article" date="2019" name="EMBO J.">
        <title>Cul3-Klhl18 ubiquitin ligase modulates rod transducin translocation during light-dark adaptation.</title>
        <authorList>
            <person name="Chaya T."/>
            <person name="Tsutsumi R."/>
            <person name="Varner L.R."/>
            <person name="Maeda Y."/>
            <person name="Yoshida S."/>
            <person name="Furukawa T."/>
        </authorList>
    </citation>
    <scope>SUBCELLULAR LOCATION</scope>
    <scope>TISSUE SPECIFICITY</scope>
</reference>
<sequence length="350" mass="39967">MGAGASAEEKHSRELEKKLKEDAEKDARTVKLLLLGAGESGKSTIVKQMKIIHQDGYSLEECLEFIAIIYGNTLQSILAIVRAMTTLNIQYGDSARQDDARKLMHMADTIEEGTMPKEMSDIIQRLWKDSGIQACFDRASEYQLNDSAGYYLSDLERLVTPGYVPTEQDVLRSRVKTTGIIETQFSFKDLNFRMFDVGGQRSERKKWIHCFEGVTCIIFIAALSAYDMVLVEDDEVNRMHESLHLFNSICNHRYFATTSIVLFLNKKDVFSEKIKKAHLSICFPDYDGPNTYEDAGNYIKVQFLELNMRRDVKEIYSHMTCATDTQNVKFVFDAVTDIIIKENLKDCGLF</sequence>
<keyword id="KW-0966">Cell projection</keyword>
<keyword id="KW-0903">Direct protein sequencing</keyword>
<keyword id="KW-0342">GTP-binding</keyword>
<keyword id="KW-0449">Lipoprotein</keyword>
<keyword id="KW-0460">Magnesium</keyword>
<keyword id="KW-0472">Membrane</keyword>
<keyword id="KW-0479">Metal-binding</keyword>
<keyword id="KW-0519">Myristate</keyword>
<keyword id="KW-0547">Nucleotide-binding</keyword>
<keyword id="KW-0597">Phosphoprotein</keyword>
<keyword id="KW-1185">Reference proteome</keyword>
<keyword id="KW-0716">Sensory transduction</keyword>
<keyword id="KW-0807">Transducer</keyword>
<keyword id="KW-0844">Vision</keyword>
<accession>P20612</accession>
<accession>Q80X34</accession>
<name>GNAT1_MOUSE</name>
<dbReference type="EMBL" id="M25513">
    <property type="protein sequence ID" value="AAA40473.1"/>
    <property type="molecule type" value="Genomic_DNA"/>
</dbReference>
<dbReference type="EMBL" id="M25506">
    <property type="protein sequence ID" value="AAA40473.1"/>
    <property type="status" value="JOINED"/>
    <property type="molecule type" value="Genomic_DNA"/>
</dbReference>
<dbReference type="EMBL" id="M25507">
    <property type="protein sequence ID" value="AAA40473.1"/>
    <property type="status" value="JOINED"/>
    <property type="molecule type" value="Genomic_DNA"/>
</dbReference>
<dbReference type="EMBL" id="M25508">
    <property type="protein sequence ID" value="AAA40473.1"/>
    <property type="status" value="JOINED"/>
    <property type="molecule type" value="Genomic_DNA"/>
</dbReference>
<dbReference type="EMBL" id="M25509">
    <property type="protein sequence ID" value="AAA40473.1"/>
    <property type="status" value="JOINED"/>
    <property type="molecule type" value="Genomic_DNA"/>
</dbReference>
<dbReference type="EMBL" id="M25510">
    <property type="protein sequence ID" value="AAA40473.1"/>
    <property type="status" value="JOINED"/>
    <property type="molecule type" value="Genomic_DNA"/>
</dbReference>
<dbReference type="EMBL" id="M25511">
    <property type="protein sequence ID" value="AAA40473.1"/>
    <property type="status" value="JOINED"/>
    <property type="molecule type" value="Genomic_DNA"/>
</dbReference>
<dbReference type="EMBL" id="M25512">
    <property type="protein sequence ID" value="AAA40473.1"/>
    <property type="status" value="JOINED"/>
    <property type="molecule type" value="Genomic_DNA"/>
</dbReference>
<dbReference type="EMBL" id="BC022793">
    <property type="protein sequence ID" value="AAH22793.1"/>
    <property type="molecule type" value="mRNA"/>
</dbReference>
<dbReference type="EMBL" id="BC051412">
    <property type="protein sequence ID" value="AAH51412.2"/>
    <property type="molecule type" value="mRNA"/>
</dbReference>
<dbReference type="EMBL" id="BC058810">
    <property type="protein sequence ID" value="AAH58810.1"/>
    <property type="molecule type" value="mRNA"/>
</dbReference>
<dbReference type="EMBL" id="U38504">
    <property type="protein sequence ID" value="AAB01735.1"/>
    <property type="molecule type" value="mRNA"/>
</dbReference>
<dbReference type="CCDS" id="CCDS23504.1"/>
<dbReference type="PIR" id="A33352">
    <property type="entry name" value="RGMST1"/>
</dbReference>
<dbReference type="RefSeq" id="NP_032166.1">
    <property type="nucleotide sequence ID" value="NM_008140.3"/>
</dbReference>
<dbReference type="SMR" id="P20612"/>
<dbReference type="BioGRID" id="199973">
    <property type="interactions" value="4"/>
</dbReference>
<dbReference type="FunCoup" id="P20612">
    <property type="interactions" value="122"/>
</dbReference>
<dbReference type="IntAct" id="P20612">
    <property type="interactions" value="1"/>
</dbReference>
<dbReference type="STRING" id="10090.ENSMUSP00000010205"/>
<dbReference type="iPTMnet" id="P20612"/>
<dbReference type="PhosphoSitePlus" id="P20612"/>
<dbReference type="jPOST" id="P20612"/>
<dbReference type="PaxDb" id="10090-ENSMUSP00000010205"/>
<dbReference type="ProteomicsDB" id="271004"/>
<dbReference type="Antibodypedia" id="13896">
    <property type="antibodies" value="193 antibodies from 26 providers"/>
</dbReference>
<dbReference type="DNASU" id="14685"/>
<dbReference type="Ensembl" id="ENSMUST00000010205.9">
    <property type="protein sequence ID" value="ENSMUSP00000010205.8"/>
    <property type="gene ID" value="ENSMUSG00000034837.13"/>
</dbReference>
<dbReference type="GeneID" id="14685"/>
<dbReference type="KEGG" id="mmu:14685"/>
<dbReference type="UCSC" id="uc009rmr.1">
    <property type="organism name" value="mouse"/>
</dbReference>
<dbReference type="AGR" id="MGI:95778"/>
<dbReference type="CTD" id="2779"/>
<dbReference type="MGI" id="MGI:95778">
    <property type="gene designation" value="Gnat1"/>
</dbReference>
<dbReference type="VEuPathDB" id="HostDB:ENSMUSG00000034837"/>
<dbReference type="eggNOG" id="KOG0082">
    <property type="taxonomic scope" value="Eukaryota"/>
</dbReference>
<dbReference type="GeneTree" id="ENSGT00940000160395"/>
<dbReference type="HOGENOM" id="CLU_014184_6_0_1"/>
<dbReference type="InParanoid" id="P20612"/>
<dbReference type="OMA" id="INYGHPD"/>
<dbReference type="OrthoDB" id="5817230at2759"/>
<dbReference type="PhylomeDB" id="P20612"/>
<dbReference type="TreeFam" id="TF300673"/>
<dbReference type="Reactome" id="R-MMU-2485179">
    <property type="pathway name" value="Activation of the phototransduction cascade"/>
</dbReference>
<dbReference type="Reactome" id="R-MMU-2514859">
    <property type="pathway name" value="Inactivation, recovery and regulation of the phototransduction cascade"/>
</dbReference>
<dbReference type="Reactome" id="R-MMU-418594">
    <property type="pathway name" value="G alpha (i) signalling events"/>
</dbReference>
<dbReference type="BioGRID-ORCS" id="14685">
    <property type="hits" value="2 hits in 78 CRISPR screens"/>
</dbReference>
<dbReference type="CD-CODE" id="01CA17F3">
    <property type="entry name" value="Centrosome"/>
</dbReference>
<dbReference type="ChiTaRS" id="Gnat1">
    <property type="organism name" value="mouse"/>
</dbReference>
<dbReference type="PRO" id="PR:P20612"/>
<dbReference type="Proteomes" id="UP000000589">
    <property type="component" value="Chromosome 9"/>
</dbReference>
<dbReference type="RNAct" id="P20612">
    <property type="molecule type" value="protein"/>
</dbReference>
<dbReference type="Bgee" id="ENSMUSG00000034837">
    <property type="expression patterns" value="Expressed in retinal neural layer and 58 other cell types or tissues"/>
</dbReference>
<dbReference type="ExpressionAtlas" id="P20612">
    <property type="expression patterns" value="baseline and differential"/>
</dbReference>
<dbReference type="GO" id="GO:0016324">
    <property type="term" value="C:apical plasma membrane"/>
    <property type="evidence" value="ECO:0007669"/>
    <property type="project" value="Ensembl"/>
</dbReference>
<dbReference type="GO" id="GO:0005834">
    <property type="term" value="C:heterotrimeric G-protein complex"/>
    <property type="evidence" value="ECO:0000266"/>
    <property type="project" value="MGI"/>
</dbReference>
<dbReference type="GO" id="GO:0016020">
    <property type="term" value="C:membrane"/>
    <property type="evidence" value="ECO:0000304"/>
    <property type="project" value="MGI"/>
</dbReference>
<dbReference type="GO" id="GO:0043025">
    <property type="term" value="C:neuronal cell body"/>
    <property type="evidence" value="ECO:0007669"/>
    <property type="project" value="Ensembl"/>
</dbReference>
<dbReference type="GO" id="GO:0032391">
    <property type="term" value="C:photoreceptor connecting cilium"/>
    <property type="evidence" value="ECO:0000314"/>
    <property type="project" value="MGI"/>
</dbReference>
<dbReference type="GO" id="GO:0001917">
    <property type="term" value="C:photoreceptor inner segment"/>
    <property type="evidence" value="ECO:0000314"/>
    <property type="project" value="UniProtKB"/>
</dbReference>
<dbReference type="GO" id="GO:0001750">
    <property type="term" value="C:photoreceptor outer segment"/>
    <property type="evidence" value="ECO:0000314"/>
    <property type="project" value="UniProtKB"/>
</dbReference>
<dbReference type="GO" id="GO:0031683">
    <property type="term" value="F:G-protein beta/gamma-subunit complex binding"/>
    <property type="evidence" value="ECO:0000314"/>
    <property type="project" value="MGI"/>
</dbReference>
<dbReference type="GO" id="GO:0005525">
    <property type="term" value="F:GTP binding"/>
    <property type="evidence" value="ECO:0007669"/>
    <property type="project" value="UniProtKB-KW"/>
</dbReference>
<dbReference type="GO" id="GO:0003924">
    <property type="term" value="F:GTPase activity"/>
    <property type="evidence" value="ECO:0000314"/>
    <property type="project" value="MGI"/>
</dbReference>
<dbReference type="GO" id="GO:0046872">
    <property type="term" value="F:metal ion binding"/>
    <property type="evidence" value="ECO:0007669"/>
    <property type="project" value="UniProtKB-KW"/>
</dbReference>
<dbReference type="GO" id="GO:0007188">
    <property type="term" value="P:adenylate cyclase-modulating G protein-coupled receptor signaling pathway"/>
    <property type="evidence" value="ECO:0007669"/>
    <property type="project" value="InterPro"/>
</dbReference>
<dbReference type="GO" id="GO:0120302">
    <property type="term" value="P:background adaptation"/>
    <property type="evidence" value="ECO:0000315"/>
    <property type="project" value="MGI"/>
</dbReference>
<dbReference type="GO" id="GO:0008283">
    <property type="term" value="P:cell population proliferation"/>
    <property type="evidence" value="ECO:0000314"/>
    <property type="project" value="MGI"/>
</dbReference>
<dbReference type="GO" id="GO:0071257">
    <property type="term" value="P:cellular response to electrical stimulus"/>
    <property type="evidence" value="ECO:0000315"/>
    <property type="project" value="MGI"/>
</dbReference>
<dbReference type="GO" id="GO:0001580">
    <property type="term" value="P:detection of chemical stimulus involved in sensory perception of bitter taste"/>
    <property type="evidence" value="ECO:0007669"/>
    <property type="project" value="Ensembl"/>
</dbReference>
<dbReference type="GO" id="GO:0009583">
    <property type="term" value="P:detection of light stimulus"/>
    <property type="evidence" value="ECO:0000314"/>
    <property type="project" value="MGI"/>
</dbReference>
<dbReference type="GO" id="GO:0050908">
    <property type="term" value="P:detection of light stimulus involved in visual perception"/>
    <property type="evidence" value="ECO:0000315"/>
    <property type="project" value="MGI"/>
</dbReference>
<dbReference type="GO" id="GO:0014046">
    <property type="term" value="P:dopamine secretion"/>
    <property type="evidence" value="ECO:0000315"/>
    <property type="project" value="MGI"/>
</dbReference>
<dbReference type="GO" id="GO:0042462">
    <property type="term" value="P:eye photoreceptor cell development"/>
    <property type="evidence" value="ECO:0000315"/>
    <property type="project" value="MGI"/>
</dbReference>
<dbReference type="GO" id="GO:0016056">
    <property type="term" value="P:G protein-coupled opsin signaling pathway"/>
    <property type="evidence" value="ECO:0007669"/>
    <property type="project" value="Ensembl"/>
</dbReference>
<dbReference type="GO" id="GO:0007186">
    <property type="term" value="P:G protein-coupled receptor signaling pathway"/>
    <property type="evidence" value="ECO:0000314"/>
    <property type="project" value="MGI"/>
</dbReference>
<dbReference type="GO" id="GO:0007199">
    <property type="term" value="P:G protein-coupled receptor signaling pathway coupled to cGMP nucleotide second messenger"/>
    <property type="evidence" value="ECO:0000304"/>
    <property type="project" value="MGI"/>
</dbReference>
<dbReference type="GO" id="GO:0097719">
    <property type="term" value="P:neural tissue regeneration"/>
    <property type="evidence" value="ECO:0000316"/>
    <property type="project" value="MGI"/>
</dbReference>
<dbReference type="GO" id="GO:0007602">
    <property type="term" value="P:phototransduction"/>
    <property type="evidence" value="ECO:0000315"/>
    <property type="project" value="MGI"/>
</dbReference>
<dbReference type="GO" id="GO:0009642">
    <property type="term" value="P:response to light intensity"/>
    <property type="evidence" value="ECO:0000315"/>
    <property type="project" value="MGI"/>
</dbReference>
<dbReference type="GO" id="GO:0009416">
    <property type="term" value="P:response to light stimulus"/>
    <property type="evidence" value="ECO:0000314"/>
    <property type="project" value="MGI"/>
</dbReference>
<dbReference type="GO" id="GO:0060041">
    <property type="term" value="P:retina development in camera-type eye"/>
    <property type="evidence" value="ECO:0000315"/>
    <property type="project" value="MGI"/>
</dbReference>
<dbReference type="GO" id="GO:0042670">
    <property type="term" value="P:retinal cone cell differentiation"/>
    <property type="evidence" value="ECO:0000314"/>
    <property type="project" value="MGI"/>
</dbReference>
<dbReference type="GO" id="GO:0060221">
    <property type="term" value="P:retinal rod cell differentiation"/>
    <property type="evidence" value="ECO:0000314"/>
    <property type="project" value="MGI"/>
</dbReference>
<dbReference type="GO" id="GO:0050917">
    <property type="term" value="P:sensory perception of umami taste"/>
    <property type="evidence" value="ECO:0000315"/>
    <property type="project" value="MGI"/>
</dbReference>
<dbReference type="GO" id="GO:0007632">
    <property type="term" value="P:visual behavior"/>
    <property type="evidence" value="ECO:0000315"/>
    <property type="project" value="MGI"/>
</dbReference>
<dbReference type="GO" id="GO:0007601">
    <property type="term" value="P:visual perception"/>
    <property type="evidence" value="ECO:0000315"/>
    <property type="project" value="MGI"/>
</dbReference>
<dbReference type="CDD" id="cd00066">
    <property type="entry name" value="G-alpha"/>
    <property type="match status" value="1"/>
</dbReference>
<dbReference type="FunFam" id="1.10.400.10:FF:000001">
    <property type="entry name" value="Guanine nucleotide-binding protein G(I) subunit alpha"/>
    <property type="match status" value="1"/>
</dbReference>
<dbReference type="FunFam" id="3.40.50.300:FF:000720">
    <property type="entry name" value="Guanine nucleotide-binding protein G(k) subunit alpha"/>
    <property type="match status" value="1"/>
</dbReference>
<dbReference type="FunFam" id="3.40.50.300:FF:000256">
    <property type="entry name" value="Guanine nucleotide-binding protein G(t) subunit alpha"/>
    <property type="match status" value="1"/>
</dbReference>
<dbReference type="Gene3D" id="1.10.400.10">
    <property type="entry name" value="GI Alpha 1, domain 2-like"/>
    <property type="match status" value="1"/>
</dbReference>
<dbReference type="Gene3D" id="3.40.50.300">
    <property type="entry name" value="P-loop containing nucleotide triphosphate hydrolases"/>
    <property type="match status" value="1"/>
</dbReference>
<dbReference type="InterPro" id="IPR001408">
    <property type="entry name" value="Gprotein_alpha_I"/>
</dbReference>
<dbReference type="InterPro" id="IPR001019">
    <property type="entry name" value="Gprotein_alpha_su"/>
</dbReference>
<dbReference type="InterPro" id="IPR011025">
    <property type="entry name" value="GproteinA_insert"/>
</dbReference>
<dbReference type="InterPro" id="IPR027417">
    <property type="entry name" value="P-loop_NTPase"/>
</dbReference>
<dbReference type="PANTHER" id="PTHR10218">
    <property type="entry name" value="GTP-BINDING PROTEIN ALPHA SUBUNIT"/>
    <property type="match status" value="1"/>
</dbReference>
<dbReference type="PANTHER" id="PTHR10218:SF67">
    <property type="entry name" value="GUANINE NUCLEOTIDE-BINDING PROTEIN G(T) SUBUNIT ALPHA-1"/>
    <property type="match status" value="1"/>
</dbReference>
<dbReference type="Pfam" id="PF00503">
    <property type="entry name" value="G-alpha"/>
    <property type="match status" value="1"/>
</dbReference>
<dbReference type="PRINTS" id="PR00318">
    <property type="entry name" value="GPROTEINA"/>
</dbReference>
<dbReference type="PRINTS" id="PR00441">
    <property type="entry name" value="GPROTEINAI"/>
</dbReference>
<dbReference type="SMART" id="SM00275">
    <property type="entry name" value="G_alpha"/>
    <property type="match status" value="1"/>
</dbReference>
<dbReference type="SUPFAM" id="SSF52540">
    <property type="entry name" value="P-loop containing nucleoside triphosphate hydrolases"/>
    <property type="match status" value="1"/>
</dbReference>
<dbReference type="SUPFAM" id="SSF47895">
    <property type="entry name" value="Transducin (alpha subunit), insertion domain"/>
    <property type="match status" value="1"/>
</dbReference>
<dbReference type="PROSITE" id="PS51882">
    <property type="entry name" value="G_ALPHA"/>
    <property type="match status" value="1"/>
</dbReference>
<protein>
    <recommendedName>
        <fullName>Guanine nucleotide-binding protein G(t) subunit alpha-1</fullName>
    </recommendedName>
    <alternativeName>
        <fullName>Transducin alpha-1 chain</fullName>
    </alternativeName>
</protein>